<name>RS17_TROW8</name>
<reference key="1">
    <citation type="journal article" date="2003" name="Lancet">
        <title>Sequencing and analysis of the genome of the Whipple's disease bacterium Tropheryma whipplei.</title>
        <authorList>
            <person name="Bentley S.D."/>
            <person name="Maiwald M."/>
            <person name="Murphy L.D."/>
            <person name="Pallen M.J."/>
            <person name="Yeats C.A."/>
            <person name="Dover L.G."/>
            <person name="Norbertczak H.T."/>
            <person name="Besra G.S."/>
            <person name="Quail M.A."/>
            <person name="Harris D.E."/>
            <person name="von Herbay A."/>
            <person name="Goble A."/>
            <person name="Rutter S."/>
            <person name="Squares R."/>
            <person name="Squares S."/>
            <person name="Barrell B.G."/>
            <person name="Parkhill J."/>
            <person name="Relman D.A."/>
        </authorList>
    </citation>
    <scope>NUCLEOTIDE SEQUENCE [LARGE SCALE GENOMIC DNA]</scope>
    <source>
        <strain>TW08/27</strain>
    </source>
</reference>
<organism>
    <name type="scientific">Tropheryma whipplei (strain TW08/27)</name>
    <name type="common">Whipple's bacillus</name>
    <dbReference type="NCBI Taxonomy" id="218496"/>
    <lineage>
        <taxon>Bacteria</taxon>
        <taxon>Bacillati</taxon>
        <taxon>Actinomycetota</taxon>
        <taxon>Actinomycetes</taxon>
        <taxon>Micrococcales</taxon>
        <taxon>Tropherymataceae</taxon>
        <taxon>Tropheryma</taxon>
    </lineage>
</organism>
<gene>
    <name evidence="1" type="primary">rpsQ</name>
    <name type="ordered locus">TW216</name>
</gene>
<sequence length="86" mass="9767">MSQQRGYRKSRRGYVTSNSMDKTIVVKIEDRVKHALYGKVIRKTSKVKAHDQGSIAGVGDLVLISETRPISATKRWRLVQILEKAK</sequence>
<proteinExistence type="inferred from homology"/>
<comment type="function">
    <text evidence="1">One of the primary rRNA binding proteins, it binds specifically to the 5'-end of 16S ribosomal RNA.</text>
</comment>
<comment type="subunit">
    <text evidence="1">Part of the 30S ribosomal subunit.</text>
</comment>
<comment type="similarity">
    <text evidence="1">Belongs to the universal ribosomal protein uS17 family.</text>
</comment>
<evidence type="ECO:0000255" key="1">
    <source>
        <dbReference type="HAMAP-Rule" id="MF_01345"/>
    </source>
</evidence>
<evidence type="ECO:0000305" key="2"/>
<keyword id="KW-0687">Ribonucleoprotein</keyword>
<keyword id="KW-0689">Ribosomal protein</keyword>
<keyword id="KW-0694">RNA-binding</keyword>
<keyword id="KW-0699">rRNA-binding</keyword>
<dbReference type="EMBL" id="BX251410">
    <property type="protein sequence ID" value="CAD66893.1"/>
    <property type="molecule type" value="Genomic_DNA"/>
</dbReference>
<dbReference type="RefSeq" id="WP_011096174.1">
    <property type="nucleotide sequence ID" value="NC_004551.1"/>
</dbReference>
<dbReference type="SMR" id="Q83I69"/>
<dbReference type="GeneID" id="67387992"/>
<dbReference type="KEGG" id="tws:TW216"/>
<dbReference type="HOGENOM" id="CLU_073626_1_0_11"/>
<dbReference type="GO" id="GO:0022627">
    <property type="term" value="C:cytosolic small ribosomal subunit"/>
    <property type="evidence" value="ECO:0007669"/>
    <property type="project" value="TreeGrafter"/>
</dbReference>
<dbReference type="GO" id="GO:0019843">
    <property type="term" value="F:rRNA binding"/>
    <property type="evidence" value="ECO:0007669"/>
    <property type="project" value="UniProtKB-UniRule"/>
</dbReference>
<dbReference type="GO" id="GO:0003735">
    <property type="term" value="F:structural constituent of ribosome"/>
    <property type="evidence" value="ECO:0007669"/>
    <property type="project" value="InterPro"/>
</dbReference>
<dbReference type="GO" id="GO:0006412">
    <property type="term" value="P:translation"/>
    <property type="evidence" value="ECO:0007669"/>
    <property type="project" value="UniProtKB-UniRule"/>
</dbReference>
<dbReference type="CDD" id="cd00364">
    <property type="entry name" value="Ribosomal_uS17"/>
    <property type="match status" value="1"/>
</dbReference>
<dbReference type="Gene3D" id="2.40.50.140">
    <property type="entry name" value="Nucleic acid-binding proteins"/>
    <property type="match status" value="1"/>
</dbReference>
<dbReference type="HAMAP" id="MF_01345_B">
    <property type="entry name" value="Ribosomal_uS17_B"/>
    <property type="match status" value="1"/>
</dbReference>
<dbReference type="InterPro" id="IPR012340">
    <property type="entry name" value="NA-bd_OB-fold"/>
</dbReference>
<dbReference type="InterPro" id="IPR000266">
    <property type="entry name" value="Ribosomal_uS17"/>
</dbReference>
<dbReference type="InterPro" id="IPR019984">
    <property type="entry name" value="Ribosomal_uS17_bact/chlr"/>
</dbReference>
<dbReference type="InterPro" id="IPR019979">
    <property type="entry name" value="Ribosomal_uS17_CS"/>
</dbReference>
<dbReference type="NCBIfam" id="NF004123">
    <property type="entry name" value="PRK05610.1"/>
    <property type="match status" value="1"/>
</dbReference>
<dbReference type="NCBIfam" id="TIGR03635">
    <property type="entry name" value="uS17_bact"/>
    <property type="match status" value="1"/>
</dbReference>
<dbReference type="PANTHER" id="PTHR10744">
    <property type="entry name" value="40S RIBOSOMAL PROTEIN S11 FAMILY MEMBER"/>
    <property type="match status" value="1"/>
</dbReference>
<dbReference type="PANTHER" id="PTHR10744:SF1">
    <property type="entry name" value="SMALL RIBOSOMAL SUBUNIT PROTEIN US17M"/>
    <property type="match status" value="1"/>
</dbReference>
<dbReference type="Pfam" id="PF00366">
    <property type="entry name" value="Ribosomal_S17"/>
    <property type="match status" value="1"/>
</dbReference>
<dbReference type="PRINTS" id="PR00973">
    <property type="entry name" value="RIBOSOMALS17"/>
</dbReference>
<dbReference type="SUPFAM" id="SSF50249">
    <property type="entry name" value="Nucleic acid-binding proteins"/>
    <property type="match status" value="1"/>
</dbReference>
<dbReference type="PROSITE" id="PS00056">
    <property type="entry name" value="RIBOSOMAL_S17"/>
    <property type="match status" value="1"/>
</dbReference>
<protein>
    <recommendedName>
        <fullName evidence="1">Small ribosomal subunit protein uS17</fullName>
    </recommendedName>
    <alternativeName>
        <fullName evidence="2">30S ribosomal protein S17</fullName>
    </alternativeName>
</protein>
<accession>Q83I69</accession>
<feature type="chain" id="PRO_0000233600" description="Small ribosomal subunit protein uS17">
    <location>
        <begin position="1"/>
        <end position="86"/>
    </location>
</feature>